<protein>
    <recommendedName>
        <fullName>Andropin</fullName>
    </recommendedName>
</protein>
<reference key="1">
    <citation type="journal article" date="1991" name="EMBO J.">
        <title>The andropin gene and its product, a male-specific antibacterial peptide in Drosophila melanogaster.</title>
        <authorList>
            <person name="Samakovlis C."/>
            <person name="Kylsten P."/>
            <person name="Kimbrell D.A."/>
            <person name="Engstroem A."/>
            <person name="Hultmark D."/>
        </authorList>
    </citation>
    <scope>NUCLEOTIDE SEQUENCE [GENOMIC DNA]</scope>
    <source>
        <strain>Canton-S</strain>
    </source>
</reference>
<reference key="2">
    <citation type="journal article" date="1997" name="Genetics">
        <title>Molecular population genetics of Drosophila immune system genes.</title>
        <authorList>
            <person name="Clark A.G."/>
            <person name="Wang L."/>
        </authorList>
    </citation>
    <scope>NUCLEOTIDE SEQUENCE [GENOMIC DNA]</scope>
    <scope>VARIANTS PHE-9; SER-34; VAL-44 AND ASN-48</scope>
    <source>
        <strain>B009</strain>
        <strain>B141</strain>
        <strain>B205</strain>
        <strain>B316</strain>
        <strain>Z10</strain>
        <strain>Z18</strain>
        <strain>Z22</strain>
        <strain>Z24</strain>
    </source>
</reference>
<reference key="3">
    <citation type="journal article" date="2002" name="J. Mol. Evol.">
        <title>Rapid evolution of the male-specific antibacterial protein andropin gene in Drosophila.</title>
        <authorList>
            <person name="Date-Ito A."/>
            <person name="Kasahara K."/>
            <person name="Sawai H."/>
            <person name="Chigusa S.I."/>
        </authorList>
    </citation>
    <scope>NUCLEOTIDE SEQUENCE [GENOMIC DNA]</scope>
    <source>
        <strain>K-1</strain>
        <strain>K-2</strain>
        <strain>K-3</strain>
        <strain>K-4</strain>
        <strain>K-5</strain>
    </source>
</reference>
<reference key="4">
    <citation type="journal article" date="2000" name="Science">
        <title>The genome sequence of Drosophila melanogaster.</title>
        <authorList>
            <person name="Adams M.D."/>
            <person name="Celniker S.E."/>
            <person name="Holt R.A."/>
            <person name="Evans C.A."/>
            <person name="Gocayne J.D."/>
            <person name="Amanatides P.G."/>
            <person name="Scherer S.E."/>
            <person name="Li P.W."/>
            <person name="Hoskins R.A."/>
            <person name="Galle R.F."/>
            <person name="George R.A."/>
            <person name="Lewis S.E."/>
            <person name="Richards S."/>
            <person name="Ashburner M."/>
            <person name="Henderson S.N."/>
            <person name="Sutton G.G."/>
            <person name="Wortman J.R."/>
            <person name="Yandell M.D."/>
            <person name="Zhang Q."/>
            <person name="Chen L.X."/>
            <person name="Brandon R.C."/>
            <person name="Rogers Y.-H.C."/>
            <person name="Blazej R.G."/>
            <person name="Champe M."/>
            <person name="Pfeiffer B.D."/>
            <person name="Wan K.H."/>
            <person name="Doyle C."/>
            <person name="Baxter E.G."/>
            <person name="Helt G."/>
            <person name="Nelson C.R."/>
            <person name="Miklos G.L.G."/>
            <person name="Abril J.F."/>
            <person name="Agbayani A."/>
            <person name="An H.-J."/>
            <person name="Andrews-Pfannkoch C."/>
            <person name="Baldwin D."/>
            <person name="Ballew R.M."/>
            <person name="Basu A."/>
            <person name="Baxendale J."/>
            <person name="Bayraktaroglu L."/>
            <person name="Beasley E.M."/>
            <person name="Beeson K.Y."/>
            <person name="Benos P.V."/>
            <person name="Berman B.P."/>
            <person name="Bhandari D."/>
            <person name="Bolshakov S."/>
            <person name="Borkova D."/>
            <person name="Botchan M.R."/>
            <person name="Bouck J."/>
            <person name="Brokstein P."/>
            <person name="Brottier P."/>
            <person name="Burtis K.C."/>
            <person name="Busam D.A."/>
            <person name="Butler H."/>
            <person name="Cadieu E."/>
            <person name="Center A."/>
            <person name="Chandra I."/>
            <person name="Cherry J.M."/>
            <person name="Cawley S."/>
            <person name="Dahlke C."/>
            <person name="Davenport L.B."/>
            <person name="Davies P."/>
            <person name="de Pablos B."/>
            <person name="Delcher A."/>
            <person name="Deng Z."/>
            <person name="Mays A.D."/>
            <person name="Dew I."/>
            <person name="Dietz S.M."/>
            <person name="Dodson K."/>
            <person name="Doup L.E."/>
            <person name="Downes M."/>
            <person name="Dugan-Rocha S."/>
            <person name="Dunkov B.C."/>
            <person name="Dunn P."/>
            <person name="Durbin K.J."/>
            <person name="Evangelista C.C."/>
            <person name="Ferraz C."/>
            <person name="Ferriera S."/>
            <person name="Fleischmann W."/>
            <person name="Fosler C."/>
            <person name="Gabrielian A.E."/>
            <person name="Garg N.S."/>
            <person name="Gelbart W.M."/>
            <person name="Glasser K."/>
            <person name="Glodek A."/>
            <person name="Gong F."/>
            <person name="Gorrell J.H."/>
            <person name="Gu Z."/>
            <person name="Guan P."/>
            <person name="Harris M."/>
            <person name="Harris N.L."/>
            <person name="Harvey D.A."/>
            <person name="Heiman T.J."/>
            <person name="Hernandez J.R."/>
            <person name="Houck J."/>
            <person name="Hostin D."/>
            <person name="Houston K.A."/>
            <person name="Howland T.J."/>
            <person name="Wei M.-H."/>
            <person name="Ibegwam C."/>
            <person name="Jalali M."/>
            <person name="Kalush F."/>
            <person name="Karpen G.H."/>
            <person name="Ke Z."/>
            <person name="Kennison J.A."/>
            <person name="Ketchum K.A."/>
            <person name="Kimmel B.E."/>
            <person name="Kodira C.D."/>
            <person name="Kraft C.L."/>
            <person name="Kravitz S."/>
            <person name="Kulp D."/>
            <person name="Lai Z."/>
            <person name="Lasko P."/>
            <person name="Lei Y."/>
            <person name="Levitsky A.A."/>
            <person name="Li J.H."/>
            <person name="Li Z."/>
            <person name="Liang Y."/>
            <person name="Lin X."/>
            <person name="Liu X."/>
            <person name="Mattei B."/>
            <person name="McIntosh T.C."/>
            <person name="McLeod M.P."/>
            <person name="McPherson D."/>
            <person name="Merkulov G."/>
            <person name="Milshina N.V."/>
            <person name="Mobarry C."/>
            <person name="Morris J."/>
            <person name="Moshrefi A."/>
            <person name="Mount S.M."/>
            <person name="Moy M."/>
            <person name="Murphy B."/>
            <person name="Murphy L."/>
            <person name="Muzny D.M."/>
            <person name="Nelson D.L."/>
            <person name="Nelson D.R."/>
            <person name="Nelson K.A."/>
            <person name="Nixon K."/>
            <person name="Nusskern D.R."/>
            <person name="Pacleb J.M."/>
            <person name="Palazzolo M."/>
            <person name="Pittman G.S."/>
            <person name="Pan S."/>
            <person name="Pollard J."/>
            <person name="Puri V."/>
            <person name="Reese M.G."/>
            <person name="Reinert K."/>
            <person name="Remington K."/>
            <person name="Saunders R.D.C."/>
            <person name="Scheeler F."/>
            <person name="Shen H."/>
            <person name="Shue B.C."/>
            <person name="Siden-Kiamos I."/>
            <person name="Simpson M."/>
            <person name="Skupski M.P."/>
            <person name="Smith T.J."/>
            <person name="Spier E."/>
            <person name="Spradling A.C."/>
            <person name="Stapleton M."/>
            <person name="Strong R."/>
            <person name="Sun E."/>
            <person name="Svirskas R."/>
            <person name="Tector C."/>
            <person name="Turner R."/>
            <person name="Venter E."/>
            <person name="Wang A.H."/>
            <person name="Wang X."/>
            <person name="Wang Z.-Y."/>
            <person name="Wassarman D.A."/>
            <person name="Weinstock G.M."/>
            <person name="Weissenbach J."/>
            <person name="Williams S.M."/>
            <person name="Woodage T."/>
            <person name="Worley K.C."/>
            <person name="Wu D."/>
            <person name="Yang S."/>
            <person name="Yao Q.A."/>
            <person name="Ye J."/>
            <person name="Yeh R.-F."/>
            <person name="Zaveri J.S."/>
            <person name="Zhan M."/>
            <person name="Zhang G."/>
            <person name="Zhao Q."/>
            <person name="Zheng L."/>
            <person name="Zheng X.H."/>
            <person name="Zhong F.N."/>
            <person name="Zhong W."/>
            <person name="Zhou X."/>
            <person name="Zhu S.C."/>
            <person name="Zhu X."/>
            <person name="Smith H.O."/>
            <person name="Gibbs R.A."/>
            <person name="Myers E.W."/>
            <person name="Rubin G.M."/>
            <person name="Venter J.C."/>
        </authorList>
    </citation>
    <scope>NUCLEOTIDE SEQUENCE [LARGE SCALE GENOMIC DNA]</scope>
    <source>
        <strain>Berkeley</strain>
    </source>
</reference>
<reference key="5">
    <citation type="journal article" date="2002" name="Genome Biol.">
        <title>Annotation of the Drosophila melanogaster euchromatic genome: a systematic review.</title>
        <authorList>
            <person name="Misra S."/>
            <person name="Crosby M.A."/>
            <person name="Mungall C.J."/>
            <person name="Matthews B.B."/>
            <person name="Campbell K.S."/>
            <person name="Hradecky P."/>
            <person name="Huang Y."/>
            <person name="Kaminker J.S."/>
            <person name="Millburn G.H."/>
            <person name="Prochnik S.E."/>
            <person name="Smith C.D."/>
            <person name="Tupy J.L."/>
            <person name="Whitfield E.J."/>
            <person name="Bayraktaroglu L."/>
            <person name="Berman B.P."/>
            <person name="Bettencourt B.R."/>
            <person name="Celniker S.E."/>
            <person name="de Grey A.D.N.J."/>
            <person name="Drysdale R.A."/>
            <person name="Harris N.L."/>
            <person name="Richter J."/>
            <person name="Russo S."/>
            <person name="Schroeder A.J."/>
            <person name="Shu S.Q."/>
            <person name="Stapleton M."/>
            <person name="Yamada C."/>
            <person name="Ashburner M."/>
            <person name="Gelbart W.M."/>
            <person name="Rubin G.M."/>
            <person name="Lewis S.E."/>
        </authorList>
    </citation>
    <scope>GENOME REANNOTATION</scope>
    <source>
        <strain>Berkeley</strain>
    </source>
</reference>
<reference key="6">
    <citation type="submission" date="2007-12" db="EMBL/GenBank/DDBJ databases">
        <authorList>
            <person name="Stapleton M."/>
            <person name="Carlson J.W."/>
            <person name="Frise E."/>
            <person name="Kapadia B."/>
            <person name="Park S."/>
            <person name="Wan K.H."/>
            <person name="Yu C."/>
            <person name="Celniker S.E."/>
        </authorList>
    </citation>
    <scope>NUCLEOTIDE SEQUENCE [LARGE SCALE MRNA]</scope>
    <source>
        <strain>Berkeley</strain>
    </source>
</reference>
<reference key="7">
    <citation type="journal article" date="1998" name="Genetics">
        <title>Molecular evolution of the Cecropin multigene family in Drosophila: functional genes vs pseudogenes.</title>
        <authorList>
            <person name="Ramos-Onsins S."/>
            <person name="Aguade M."/>
        </authorList>
    </citation>
    <scope>NUCLEOTIDE SEQUENCE [GENOMIC DNA] OF 43-57</scope>
    <source>
        <strain>M11</strain>
        <strain>M2</strain>
        <strain>M26</strain>
        <strain>M36</strain>
        <strain>M40</strain>
        <strain>M47</strain>
        <strain>M54</strain>
        <strain>M55</strain>
        <strain>M66</strain>
    </source>
</reference>
<accession>P21663</accession>
<accession>A9UNE4</accession>
<accession>O16822</accession>
<accession>O16823</accession>
<accession>O16824</accession>
<accession>Q6LAI1</accession>
<accession>Q9VA90</accession>
<organism>
    <name type="scientific">Drosophila melanogaster</name>
    <name type="common">Fruit fly</name>
    <dbReference type="NCBI Taxonomy" id="7227"/>
    <lineage>
        <taxon>Eukaryota</taxon>
        <taxon>Metazoa</taxon>
        <taxon>Ecdysozoa</taxon>
        <taxon>Arthropoda</taxon>
        <taxon>Hexapoda</taxon>
        <taxon>Insecta</taxon>
        <taxon>Pterygota</taxon>
        <taxon>Neoptera</taxon>
        <taxon>Endopterygota</taxon>
        <taxon>Diptera</taxon>
        <taxon>Brachycera</taxon>
        <taxon>Muscomorpha</taxon>
        <taxon>Ephydroidea</taxon>
        <taxon>Drosophilidae</taxon>
        <taxon>Drosophila</taxon>
        <taxon>Sophophora</taxon>
    </lineage>
</organism>
<gene>
    <name type="primary">Anp</name>
    <name type="synonym">ANR</name>
    <name type="ORF">CG1361</name>
</gene>
<sequence>MKYFVVLVVLALILAISVGPSDAVFIDILDKVENAIHNAAQVGIGFAKPFEKLINPK</sequence>
<comment type="function">
    <text>Male-specific peptide with moderate activity against Gram-positive bacteria.</text>
</comment>
<comment type="subcellular location">
    <subcellularLocation>
        <location>Secreted</location>
    </subcellularLocation>
</comment>
<comment type="tissue specificity">
    <text>Ejaculatory duct of adult males.</text>
</comment>
<comment type="induction">
    <text>In response to mating.</text>
</comment>
<comment type="similarity">
    <text evidence="3">Belongs to the andropin family.</text>
</comment>
<evidence type="ECO:0000255" key="1"/>
<evidence type="ECO:0000269" key="2">
    <source>
    </source>
</evidence>
<evidence type="ECO:0000305" key="3"/>
<keyword id="KW-0044">Antibiotic</keyword>
<keyword id="KW-0929">Antimicrobial</keyword>
<keyword id="KW-0391">Immunity</keyword>
<keyword id="KW-0399">Innate immunity</keyword>
<keyword id="KW-1185">Reference proteome</keyword>
<keyword id="KW-0964">Secreted</keyword>
<keyword id="KW-0732">Signal</keyword>
<dbReference type="EMBL" id="X16972">
    <property type="protein sequence ID" value="CAA34842.1"/>
    <property type="molecule type" value="Genomic_DNA"/>
</dbReference>
<dbReference type="EMBL" id="X56726">
    <property type="protein sequence ID" value="CAA40046.1"/>
    <property type="molecule type" value="Genomic_DNA"/>
</dbReference>
<dbReference type="EMBL" id="AF018985">
    <property type="protein sequence ID" value="AAB82482.1"/>
    <property type="molecule type" value="Genomic_DNA"/>
</dbReference>
<dbReference type="EMBL" id="AF018986">
    <property type="protein sequence ID" value="AAB82483.1"/>
    <property type="molecule type" value="Genomic_DNA"/>
</dbReference>
<dbReference type="EMBL" id="AF018987">
    <property type="protein sequence ID" value="AAB82484.1"/>
    <property type="molecule type" value="Genomic_DNA"/>
</dbReference>
<dbReference type="EMBL" id="AF018988">
    <property type="protein sequence ID" value="AAB82485.1"/>
    <property type="molecule type" value="Genomic_DNA"/>
</dbReference>
<dbReference type="EMBL" id="AF018989">
    <property type="protein sequence ID" value="AAB82486.1"/>
    <property type="molecule type" value="Genomic_DNA"/>
</dbReference>
<dbReference type="EMBL" id="AF018990">
    <property type="protein sequence ID" value="AAB82487.1"/>
    <property type="molecule type" value="Genomic_DNA"/>
</dbReference>
<dbReference type="EMBL" id="AF018991">
    <property type="protein sequence ID" value="AAB82488.1"/>
    <property type="molecule type" value="Genomic_DNA"/>
</dbReference>
<dbReference type="EMBL" id="AF018992">
    <property type="protein sequence ID" value="AAB82489.1"/>
    <property type="molecule type" value="Genomic_DNA"/>
</dbReference>
<dbReference type="EMBL" id="AB047046">
    <property type="protein sequence ID" value="BAB78551.1"/>
    <property type="molecule type" value="Genomic_DNA"/>
</dbReference>
<dbReference type="EMBL" id="AB047047">
    <property type="protein sequence ID" value="BAB78552.1"/>
    <property type="molecule type" value="Genomic_DNA"/>
</dbReference>
<dbReference type="EMBL" id="AB047048">
    <property type="protein sequence ID" value="BAB78553.1"/>
    <property type="molecule type" value="Genomic_DNA"/>
</dbReference>
<dbReference type="EMBL" id="AB047049">
    <property type="protein sequence ID" value="BAB78554.1"/>
    <property type="molecule type" value="Genomic_DNA"/>
</dbReference>
<dbReference type="EMBL" id="AB047050">
    <property type="protein sequence ID" value="BAB78555.1"/>
    <property type="molecule type" value="Genomic_DNA"/>
</dbReference>
<dbReference type="EMBL" id="AE014297">
    <property type="protein sequence ID" value="AAF57024.1"/>
    <property type="molecule type" value="Genomic_DNA"/>
</dbReference>
<dbReference type="EMBL" id="BT031308">
    <property type="protein sequence ID" value="ABY20549.1"/>
    <property type="molecule type" value="mRNA"/>
</dbReference>
<dbReference type="EMBL" id="Y16852">
    <property type="protein sequence ID" value="CAA76424.1"/>
    <property type="molecule type" value="Genomic_DNA"/>
</dbReference>
<dbReference type="EMBL" id="Y16853">
    <property type="protein sequence ID" value="CAA76430.1"/>
    <property type="molecule type" value="Genomic_DNA"/>
</dbReference>
<dbReference type="EMBL" id="Y16854">
    <property type="protein sequence ID" value="CAA76436.1"/>
    <property type="molecule type" value="Genomic_DNA"/>
</dbReference>
<dbReference type="EMBL" id="Y16855">
    <property type="protein sequence ID" value="CAA76442.1"/>
    <property type="molecule type" value="Genomic_DNA"/>
</dbReference>
<dbReference type="EMBL" id="Y16856">
    <property type="protein sequence ID" value="CAA76448.1"/>
    <property type="molecule type" value="Genomic_DNA"/>
</dbReference>
<dbReference type="EMBL" id="Y16857">
    <property type="protein sequence ID" value="CAA76454.1"/>
    <property type="molecule type" value="Genomic_DNA"/>
</dbReference>
<dbReference type="EMBL" id="Y16858">
    <property type="protein sequence ID" value="CAA76460.1"/>
    <property type="molecule type" value="Genomic_DNA"/>
</dbReference>
<dbReference type="EMBL" id="Y16859">
    <property type="protein sequence ID" value="CAA76466.1"/>
    <property type="molecule type" value="Genomic_DNA"/>
</dbReference>
<dbReference type="EMBL" id="Y16861">
    <property type="protein sequence ID" value="CAA76476.1"/>
    <property type="molecule type" value="Genomic_DNA"/>
</dbReference>
<dbReference type="PIR" id="S13450">
    <property type="entry name" value="S13450"/>
</dbReference>
<dbReference type="RefSeq" id="NP_001287605.1">
    <property type="nucleotide sequence ID" value="NM_001300676.1"/>
</dbReference>
<dbReference type="RefSeq" id="NP_524587.1">
    <property type="nucleotide sequence ID" value="NM_079848.3"/>
</dbReference>
<dbReference type="SMR" id="P21663"/>
<dbReference type="BioGRID" id="68451">
    <property type="interactions" value="5"/>
</dbReference>
<dbReference type="DIP" id="DIP-21373N"/>
<dbReference type="FunCoup" id="P21663">
    <property type="interactions" value="43"/>
</dbReference>
<dbReference type="IntAct" id="P21663">
    <property type="interactions" value="5"/>
</dbReference>
<dbReference type="STRING" id="7227.FBpp0311969"/>
<dbReference type="PaxDb" id="7227-FBpp0084976"/>
<dbReference type="DNASU" id="43595"/>
<dbReference type="EnsemblMetazoa" id="FBtr0085611">
    <property type="protein sequence ID" value="FBpp0084976"/>
    <property type="gene ID" value="FBgn0000094"/>
</dbReference>
<dbReference type="EnsemblMetazoa" id="FBtr0346141">
    <property type="protein sequence ID" value="FBpp0311969"/>
    <property type="gene ID" value="FBgn0000094"/>
</dbReference>
<dbReference type="GeneID" id="43595"/>
<dbReference type="KEGG" id="dme:Dmel_CG1361"/>
<dbReference type="UCSC" id="CG1361-RA">
    <property type="organism name" value="d. melanogaster"/>
</dbReference>
<dbReference type="AGR" id="FB:FBgn0000094"/>
<dbReference type="CTD" id="43595"/>
<dbReference type="FlyBase" id="FBgn0000094">
    <property type="gene designation" value="Anp"/>
</dbReference>
<dbReference type="VEuPathDB" id="VectorBase:FBgn0000094"/>
<dbReference type="HOGENOM" id="CLU_2998613_0_0_1"/>
<dbReference type="InParanoid" id="P21663"/>
<dbReference type="OMA" id="VIHNVAK"/>
<dbReference type="OrthoDB" id="7865560at2759"/>
<dbReference type="PhylomeDB" id="P21663"/>
<dbReference type="SignaLink" id="P21663"/>
<dbReference type="BioGRID-ORCS" id="43595">
    <property type="hits" value="0 hits in 1 CRISPR screen"/>
</dbReference>
<dbReference type="GenomeRNAi" id="43595"/>
<dbReference type="PRO" id="PR:P21663"/>
<dbReference type="Proteomes" id="UP000000803">
    <property type="component" value="Chromosome 3R"/>
</dbReference>
<dbReference type="Bgee" id="FBgn0000094">
    <property type="expression patterns" value="Expressed in spermatid in male reproductive gland and 42 other cell types or tissues"/>
</dbReference>
<dbReference type="ExpressionAtlas" id="P21663">
    <property type="expression patterns" value="baseline and differential"/>
</dbReference>
<dbReference type="GO" id="GO:0005576">
    <property type="term" value="C:extracellular region"/>
    <property type="evidence" value="ECO:0000314"/>
    <property type="project" value="UniProtKB"/>
</dbReference>
<dbReference type="GO" id="GO:0005615">
    <property type="term" value="C:extracellular space"/>
    <property type="evidence" value="ECO:0007005"/>
    <property type="project" value="FlyBase"/>
</dbReference>
<dbReference type="GO" id="GO:0050830">
    <property type="term" value="P:defense response to Gram-positive bacterium"/>
    <property type="evidence" value="ECO:0000314"/>
    <property type="project" value="UniProtKB"/>
</dbReference>
<dbReference type="GO" id="GO:0045087">
    <property type="term" value="P:innate immune response"/>
    <property type="evidence" value="ECO:0007669"/>
    <property type="project" value="UniProtKB-KW"/>
</dbReference>
<dbReference type="GO" id="GO:0006962">
    <property type="term" value="P:male-specific antibacterial humoral response"/>
    <property type="evidence" value="ECO:0000314"/>
    <property type="project" value="UniProtKB"/>
</dbReference>
<dbReference type="GO" id="GO:0009617">
    <property type="term" value="P:response to bacterium"/>
    <property type="evidence" value="ECO:0000304"/>
    <property type="project" value="FlyBase"/>
</dbReference>
<dbReference type="GO" id="GO:0019953">
    <property type="term" value="P:sexual reproduction"/>
    <property type="evidence" value="ECO:0007007"/>
    <property type="project" value="FlyBase"/>
</dbReference>
<dbReference type="InterPro" id="IPR000875">
    <property type="entry name" value="Cecropin"/>
</dbReference>
<dbReference type="Pfam" id="PF00272">
    <property type="entry name" value="Cecropin"/>
    <property type="match status" value="1"/>
</dbReference>
<name>ANDP_DROME</name>
<feature type="signal peptide" evidence="1">
    <location>
        <begin position="1"/>
        <end position="23"/>
    </location>
</feature>
<feature type="peptide" id="PRO_0000004952" description="Andropin">
    <location>
        <begin position="24"/>
        <end position="57"/>
    </location>
</feature>
<feature type="sequence variant" description="In strain: B316." evidence="2">
    <original>V</original>
    <variation>F</variation>
    <location>
        <position position="9"/>
    </location>
</feature>
<feature type="sequence variant" description="In strain: B205." evidence="2">
    <original>N</original>
    <variation>S</variation>
    <location>
        <position position="34"/>
    </location>
</feature>
<feature type="sequence variant" description="In strain: B316." evidence="2">
    <original>I</original>
    <variation>V</variation>
    <location>
        <position position="44"/>
    </location>
</feature>
<feature type="sequence variant" description="In strain: Z22." evidence="2">
    <original>K</original>
    <variation>N</variation>
    <location>
        <position position="48"/>
    </location>
</feature>
<proteinExistence type="evidence at transcript level"/>